<keyword id="KW-0229">DNA integration</keyword>
<keyword id="KW-0230">DNA invertase</keyword>
<keyword id="KW-0233">DNA recombination</keyword>
<keyword id="KW-0238">DNA-binding</keyword>
<keyword id="KW-0614">Plasmid</keyword>
<keyword id="KW-0814">Transposable element</keyword>
<reference key="1">
    <citation type="journal article" date="1988" name="FEMS Microbiol. Lett.">
        <title>A DNA invertase from Staphylococcus aureus is a member of the hin family of site-specific recombinases.</title>
        <authorList>
            <person name="Rowland S.J."/>
            <person name="Dyke K.G.H."/>
        </authorList>
    </citation>
    <scope>NUCLEOTIDE SEQUENCE [GENOMIC DNA]</scope>
</reference>
<reference key="2">
    <citation type="journal article" date="1989" name="EMBO J.">
        <title>Characterization of the staphylococcal beta-lactamase transposon Tn552.</title>
        <authorList>
            <person name="Rowland S.J."/>
            <person name="Dyke K.G.H."/>
        </authorList>
    </citation>
    <scope>NUCLEOTIDE SEQUENCE [GENOMIC DNA]</scope>
    <source>
        <strain>NCTC 9789 / PS80</strain>
    </source>
</reference>
<feature type="chain" id="PRO_0000196381" description="Transposon Tn552 DNA-invertase BinR">
    <location>
        <begin position="1"/>
        <end position="192"/>
    </location>
</feature>
<feature type="domain" description="Resolvase/invertase-type recombinase catalytic" evidence="2">
    <location>
        <begin position="1"/>
        <end position="136"/>
    </location>
</feature>
<feature type="DNA-binding region" description="H-T-H motif" evidence="1">
    <location>
        <begin position="163"/>
        <end position="182"/>
    </location>
</feature>
<feature type="active site" description="O-(5'-phospho-DNA)-serine intermediate" evidence="2">
    <location>
        <position position="9"/>
    </location>
</feature>
<dbReference type="EMBL" id="M36694">
    <property type="protein sequence ID" value="AAA26640.1"/>
    <property type="molecule type" value="Genomic_DNA"/>
</dbReference>
<dbReference type="EMBL" id="X16298">
    <property type="protein sequence ID" value="CAA34365.1"/>
    <property type="molecule type" value="Genomic_DNA"/>
</dbReference>
<dbReference type="PIR" id="S16509">
    <property type="entry name" value="S16509"/>
</dbReference>
<dbReference type="RefSeq" id="WP_000690630.1">
    <property type="nucleotide sequence ID" value="NZ_UHCQ01000001.1"/>
</dbReference>
<dbReference type="RefSeq" id="YP_006937605.1">
    <property type="nucleotide sequence ID" value="NC_013319.1"/>
</dbReference>
<dbReference type="RefSeq" id="YP_006938736.1">
    <property type="nucleotide sequence ID" value="NC_013351.1"/>
</dbReference>
<dbReference type="RefSeq" id="YP_006938773.1">
    <property type="nucleotide sequence ID" value="NC_013352.1"/>
</dbReference>
<dbReference type="SMR" id="P19241"/>
<dbReference type="GO" id="GO:0003677">
    <property type="term" value="F:DNA binding"/>
    <property type="evidence" value="ECO:0007669"/>
    <property type="project" value="UniProtKB-KW"/>
</dbReference>
<dbReference type="GO" id="GO:0000150">
    <property type="term" value="F:DNA strand exchange activity"/>
    <property type="evidence" value="ECO:0007669"/>
    <property type="project" value="UniProtKB-KW"/>
</dbReference>
<dbReference type="GO" id="GO:0015074">
    <property type="term" value="P:DNA integration"/>
    <property type="evidence" value="ECO:0007669"/>
    <property type="project" value="UniProtKB-KW"/>
</dbReference>
<dbReference type="CDD" id="cd00569">
    <property type="entry name" value="HTH_Hin_like"/>
    <property type="match status" value="1"/>
</dbReference>
<dbReference type="CDD" id="cd03768">
    <property type="entry name" value="SR_ResInv"/>
    <property type="match status" value="1"/>
</dbReference>
<dbReference type="FunFam" id="3.40.50.1390:FF:000001">
    <property type="entry name" value="DNA recombinase"/>
    <property type="match status" value="1"/>
</dbReference>
<dbReference type="Gene3D" id="1.10.10.60">
    <property type="entry name" value="Homeodomain-like"/>
    <property type="match status" value="1"/>
</dbReference>
<dbReference type="Gene3D" id="3.40.50.1390">
    <property type="entry name" value="Resolvase, N-terminal catalytic domain"/>
    <property type="match status" value="1"/>
</dbReference>
<dbReference type="InterPro" id="IPR009057">
    <property type="entry name" value="Homeodomain-like_sf"/>
</dbReference>
<dbReference type="InterPro" id="IPR006118">
    <property type="entry name" value="Recombinase_CS"/>
</dbReference>
<dbReference type="InterPro" id="IPR006119">
    <property type="entry name" value="Resolv_N"/>
</dbReference>
<dbReference type="InterPro" id="IPR036162">
    <property type="entry name" value="Resolvase-like_N_sf"/>
</dbReference>
<dbReference type="InterPro" id="IPR006120">
    <property type="entry name" value="Resolvase_HTH_dom"/>
</dbReference>
<dbReference type="InterPro" id="IPR050639">
    <property type="entry name" value="SSR_resolvase"/>
</dbReference>
<dbReference type="PANTHER" id="PTHR30461">
    <property type="entry name" value="DNA-INVERTASE FROM LAMBDOID PROPHAGE"/>
    <property type="match status" value="1"/>
</dbReference>
<dbReference type="PANTHER" id="PTHR30461:SF2">
    <property type="entry name" value="SERINE RECOMBINASE PINE-RELATED"/>
    <property type="match status" value="1"/>
</dbReference>
<dbReference type="Pfam" id="PF02796">
    <property type="entry name" value="HTH_7"/>
    <property type="match status" value="1"/>
</dbReference>
<dbReference type="Pfam" id="PF00239">
    <property type="entry name" value="Resolvase"/>
    <property type="match status" value="1"/>
</dbReference>
<dbReference type="SMART" id="SM00857">
    <property type="entry name" value="Resolvase"/>
    <property type="match status" value="1"/>
</dbReference>
<dbReference type="SUPFAM" id="SSF46689">
    <property type="entry name" value="Homeodomain-like"/>
    <property type="match status" value="1"/>
</dbReference>
<dbReference type="SUPFAM" id="SSF53041">
    <property type="entry name" value="Resolvase-like"/>
    <property type="match status" value="1"/>
</dbReference>
<dbReference type="PROSITE" id="PS00397">
    <property type="entry name" value="RECOMBINASES_1"/>
    <property type="match status" value="1"/>
</dbReference>
<dbReference type="PROSITE" id="PS00398">
    <property type="entry name" value="RECOMBINASES_2"/>
    <property type="match status" value="1"/>
</dbReference>
<dbReference type="PROSITE" id="PS51736">
    <property type="entry name" value="RECOMBINASES_3"/>
    <property type="match status" value="1"/>
</dbReference>
<comment type="function">
    <text>DNA-invertase, mediating the inversion of inv.</text>
</comment>
<comment type="similarity">
    <text evidence="3">Belongs to the site-specific recombinase resolvase family.</text>
</comment>
<sequence>MKIGYARVSTGLQNLNLQEDRLNQYGCEKIFSDHISGAKSKRPGLDRAIEFARSGDTIVVWRLDRLGRNMADLITLVNELNNRGVSFHSLEENITMDKSSSTGQLLFHLFAAFAEFERNLILERSSAGRIAARARGRYGGRPEKLNKQDLTLLKTLYDNGTPIKTIAEQWKVSRTTIYRYLNKLNNQENKDK</sequence>
<evidence type="ECO:0000255" key="1"/>
<evidence type="ECO:0000255" key="2">
    <source>
        <dbReference type="PROSITE-ProRule" id="PRU01072"/>
    </source>
</evidence>
<evidence type="ECO:0000305" key="3"/>
<name>BINR_STAAU</name>
<geneLocation type="plasmid">
    <name>pI9789</name>
</geneLocation>
<protein>
    <recommendedName>
        <fullName>Transposon Tn552 DNA-invertase BinR</fullName>
    </recommendedName>
</protein>
<proteinExistence type="inferred from homology"/>
<gene>
    <name type="primary">resR</name>
    <name type="synonym">binR</name>
</gene>
<organism>
    <name type="scientific">Staphylococcus aureus</name>
    <dbReference type="NCBI Taxonomy" id="1280"/>
    <lineage>
        <taxon>Bacteria</taxon>
        <taxon>Bacillati</taxon>
        <taxon>Bacillota</taxon>
        <taxon>Bacilli</taxon>
        <taxon>Bacillales</taxon>
        <taxon>Staphylococcaceae</taxon>
        <taxon>Staphylococcus</taxon>
    </lineage>
</organism>
<accession>P19241</accession>